<gene>
    <name type="primary">Ube2c</name>
    <name type="synonym">Ubch10</name>
</gene>
<accession>Q9D1C1</accession>
<accession>Q3TUJ0</accession>
<keyword id="KW-0007">Acetylation</keyword>
<keyword id="KW-0067">ATP-binding</keyword>
<keyword id="KW-0131">Cell cycle</keyword>
<keyword id="KW-0132">Cell division</keyword>
<keyword id="KW-0498">Mitosis</keyword>
<keyword id="KW-0547">Nucleotide-binding</keyword>
<keyword id="KW-0597">Phosphoprotein</keyword>
<keyword id="KW-1185">Reference proteome</keyword>
<keyword id="KW-0808">Transferase</keyword>
<keyword id="KW-0832">Ubl conjugation</keyword>
<keyword id="KW-0833">Ubl conjugation pathway</keyword>
<evidence type="ECO:0000250" key="1">
    <source>
        <dbReference type="UniProtKB" id="O00762"/>
    </source>
</evidence>
<evidence type="ECO:0000255" key="2">
    <source>
        <dbReference type="PROSITE-ProRule" id="PRU00388"/>
    </source>
</evidence>
<evidence type="ECO:0000255" key="3">
    <source>
        <dbReference type="PROSITE-ProRule" id="PRU10133"/>
    </source>
</evidence>
<reference key="1">
    <citation type="journal article" date="2005" name="Science">
        <title>The transcriptional landscape of the mammalian genome.</title>
        <authorList>
            <person name="Carninci P."/>
            <person name="Kasukawa T."/>
            <person name="Katayama S."/>
            <person name="Gough J."/>
            <person name="Frith M.C."/>
            <person name="Maeda N."/>
            <person name="Oyama R."/>
            <person name="Ravasi T."/>
            <person name="Lenhard B."/>
            <person name="Wells C."/>
            <person name="Kodzius R."/>
            <person name="Shimokawa K."/>
            <person name="Bajic V.B."/>
            <person name="Brenner S.E."/>
            <person name="Batalov S."/>
            <person name="Forrest A.R."/>
            <person name="Zavolan M."/>
            <person name="Davis M.J."/>
            <person name="Wilming L.G."/>
            <person name="Aidinis V."/>
            <person name="Allen J.E."/>
            <person name="Ambesi-Impiombato A."/>
            <person name="Apweiler R."/>
            <person name="Aturaliya R.N."/>
            <person name="Bailey T.L."/>
            <person name="Bansal M."/>
            <person name="Baxter L."/>
            <person name="Beisel K.W."/>
            <person name="Bersano T."/>
            <person name="Bono H."/>
            <person name="Chalk A.M."/>
            <person name="Chiu K.P."/>
            <person name="Choudhary V."/>
            <person name="Christoffels A."/>
            <person name="Clutterbuck D.R."/>
            <person name="Crowe M.L."/>
            <person name="Dalla E."/>
            <person name="Dalrymple B.P."/>
            <person name="de Bono B."/>
            <person name="Della Gatta G."/>
            <person name="di Bernardo D."/>
            <person name="Down T."/>
            <person name="Engstrom P."/>
            <person name="Fagiolini M."/>
            <person name="Faulkner G."/>
            <person name="Fletcher C.F."/>
            <person name="Fukushima T."/>
            <person name="Furuno M."/>
            <person name="Futaki S."/>
            <person name="Gariboldi M."/>
            <person name="Georgii-Hemming P."/>
            <person name="Gingeras T.R."/>
            <person name="Gojobori T."/>
            <person name="Green R.E."/>
            <person name="Gustincich S."/>
            <person name="Harbers M."/>
            <person name="Hayashi Y."/>
            <person name="Hensch T.K."/>
            <person name="Hirokawa N."/>
            <person name="Hill D."/>
            <person name="Huminiecki L."/>
            <person name="Iacono M."/>
            <person name="Ikeo K."/>
            <person name="Iwama A."/>
            <person name="Ishikawa T."/>
            <person name="Jakt M."/>
            <person name="Kanapin A."/>
            <person name="Katoh M."/>
            <person name="Kawasawa Y."/>
            <person name="Kelso J."/>
            <person name="Kitamura H."/>
            <person name="Kitano H."/>
            <person name="Kollias G."/>
            <person name="Krishnan S.P."/>
            <person name="Kruger A."/>
            <person name="Kummerfeld S.K."/>
            <person name="Kurochkin I.V."/>
            <person name="Lareau L.F."/>
            <person name="Lazarevic D."/>
            <person name="Lipovich L."/>
            <person name="Liu J."/>
            <person name="Liuni S."/>
            <person name="McWilliam S."/>
            <person name="Madan Babu M."/>
            <person name="Madera M."/>
            <person name="Marchionni L."/>
            <person name="Matsuda H."/>
            <person name="Matsuzawa S."/>
            <person name="Miki H."/>
            <person name="Mignone F."/>
            <person name="Miyake S."/>
            <person name="Morris K."/>
            <person name="Mottagui-Tabar S."/>
            <person name="Mulder N."/>
            <person name="Nakano N."/>
            <person name="Nakauchi H."/>
            <person name="Ng P."/>
            <person name="Nilsson R."/>
            <person name="Nishiguchi S."/>
            <person name="Nishikawa S."/>
            <person name="Nori F."/>
            <person name="Ohara O."/>
            <person name="Okazaki Y."/>
            <person name="Orlando V."/>
            <person name="Pang K.C."/>
            <person name="Pavan W.J."/>
            <person name="Pavesi G."/>
            <person name="Pesole G."/>
            <person name="Petrovsky N."/>
            <person name="Piazza S."/>
            <person name="Reed J."/>
            <person name="Reid J.F."/>
            <person name="Ring B.Z."/>
            <person name="Ringwald M."/>
            <person name="Rost B."/>
            <person name="Ruan Y."/>
            <person name="Salzberg S.L."/>
            <person name="Sandelin A."/>
            <person name="Schneider C."/>
            <person name="Schoenbach C."/>
            <person name="Sekiguchi K."/>
            <person name="Semple C.A."/>
            <person name="Seno S."/>
            <person name="Sessa L."/>
            <person name="Sheng Y."/>
            <person name="Shibata Y."/>
            <person name="Shimada H."/>
            <person name="Shimada K."/>
            <person name="Silva D."/>
            <person name="Sinclair B."/>
            <person name="Sperling S."/>
            <person name="Stupka E."/>
            <person name="Sugiura K."/>
            <person name="Sultana R."/>
            <person name="Takenaka Y."/>
            <person name="Taki K."/>
            <person name="Tammoja K."/>
            <person name="Tan S.L."/>
            <person name="Tang S."/>
            <person name="Taylor M.S."/>
            <person name="Tegner J."/>
            <person name="Teichmann S.A."/>
            <person name="Ueda H.R."/>
            <person name="van Nimwegen E."/>
            <person name="Verardo R."/>
            <person name="Wei C.L."/>
            <person name="Yagi K."/>
            <person name="Yamanishi H."/>
            <person name="Zabarovsky E."/>
            <person name="Zhu S."/>
            <person name="Zimmer A."/>
            <person name="Hide W."/>
            <person name="Bult C."/>
            <person name="Grimmond S.M."/>
            <person name="Teasdale R.D."/>
            <person name="Liu E.T."/>
            <person name="Brusic V."/>
            <person name="Quackenbush J."/>
            <person name="Wahlestedt C."/>
            <person name="Mattick J.S."/>
            <person name="Hume D.A."/>
            <person name="Kai C."/>
            <person name="Sasaki D."/>
            <person name="Tomaru Y."/>
            <person name="Fukuda S."/>
            <person name="Kanamori-Katayama M."/>
            <person name="Suzuki M."/>
            <person name="Aoki J."/>
            <person name="Arakawa T."/>
            <person name="Iida J."/>
            <person name="Imamura K."/>
            <person name="Itoh M."/>
            <person name="Kato T."/>
            <person name="Kawaji H."/>
            <person name="Kawagashira N."/>
            <person name="Kawashima T."/>
            <person name="Kojima M."/>
            <person name="Kondo S."/>
            <person name="Konno H."/>
            <person name="Nakano K."/>
            <person name="Ninomiya N."/>
            <person name="Nishio T."/>
            <person name="Okada M."/>
            <person name="Plessy C."/>
            <person name="Shibata K."/>
            <person name="Shiraki T."/>
            <person name="Suzuki S."/>
            <person name="Tagami M."/>
            <person name="Waki K."/>
            <person name="Watahiki A."/>
            <person name="Okamura-Oho Y."/>
            <person name="Suzuki H."/>
            <person name="Kawai J."/>
            <person name="Hayashizaki Y."/>
        </authorList>
    </citation>
    <scope>NUCLEOTIDE SEQUENCE [LARGE SCALE MRNA]</scope>
    <source>
        <strain>C57BL/6J</strain>
        <tissue>Embryo</tissue>
        <tissue>Head</tissue>
    </source>
</reference>
<reference key="2">
    <citation type="journal article" date="2010" name="Cell">
        <title>A tissue-specific atlas of mouse protein phosphorylation and expression.</title>
        <authorList>
            <person name="Huttlin E.L."/>
            <person name="Jedrychowski M.P."/>
            <person name="Elias J.E."/>
            <person name="Goswami T."/>
            <person name="Rad R."/>
            <person name="Beausoleil S.A."/>
            <person name="Villen J."/>
            <person name="Haas W."/>
            <person name="Sowa M.E."/>
            <person name="Gygi S.P."/>
        </authorList>
    </citation>
    <scope>IDENTIFICATION BY MASS SPECTROMETRY [LARGE SCALE ANALYSIS]</scope>
    <source>
        <tissue>Spleen</tissue>
    </source>
</reference>
<sequence length="179" mass="19606">MASQNRDPAAASVAAVRKGAEPCGGAARGPVGKRLQQELMILMTSGDKGISAFPESDNLFKWVGTIHGAAGTVYEDLRYKLSLEFPSGYPYNAPTVKFLTPCYHPNVDTQGNICLDILKDKWSALYDVRTILLSIQSLLGEPNIDSPLNTHAAELWKNPTAFKKYLQETYSKQVSSQDP</sequence>
<proteinExistence type="evidence at protein level"/>
<dbReference type="EC" id="2.3.2.23"/>
<dbReference type="EC" id="2.3.2.24"/>
<dbReference type="EMBL" id="AK003722">
    <property type="protein sequence ID" value="BAB22959.1"/>
    <property type="molecule type" value="mRNA"/>
</dbReference>
<dbReference type="EMBL" id="AK160740">
    <property type="protein sequence ID" value="BAE35981.1"/>
    <property type="molecule type" value="mRNA"/>
</dbReference>
<dbReference type="CCDS" id="CCDS17055.1"/>
<dbReference type="RefSeq" id="NP_081061.1">
    <property type="nucleotide sequence ID" value="NM_026785.2"/>
</dbReference>
<dbReference type="SMR" id="Q9D1C1"/>
<dbReference type="BioGRID" id="212952">
    <property type="interactions" value="4"/>
</dbReference>
<dbReference type="FunCoup" id="Q9D1C1">
    <property type="interactions" value="1452"/>
</dbReference>
<dbReference type="STRING" id="10090.ENSMUSP00000085581"/>
<dbReference type="GlyGen" id="Q9D1C1">
    <property type="glycosylation" value="1 site, 1 O-linked glycan (1 site)"/>
</dbReference>
<dbReference type="iPTMnet" id="Q9D1C1"/>
<dbReference type="PhosphoSitePlus" id="Q9D1C1"/>
<dbReference type="SwissPalm" id="Q9D1C1"/>
<dbReference type="jPOST" id="Q9D1C1"/>
<dbReference type="PaxDb" id="10090-ENSMUSP00000085581"/>
<dbReference type="ProteomicsDB" id="298180"/>
<dbReference type="Pumba" id="Q9D1C1"/>
<dbReference type="Antibodypedia" id="27753">
    <property type="antibodies" value="498 antibodies from 37 providers"/>
</dbReference>
<dbReference type="DNASU" id="68612"/>
<dbReference type="Ensembl" id="ENSMUST00000088248.13">
    <property type="protein sequence ID" value="ENSMUSP00000085581.7"/>
    <property type="gene ID" value="ENSMUSG00000001403.14"/>
</dbReference>
<dbReference type="GeneID" id="68612"/>
<dbReference type="KEGG" id="mmu:68612"/>
<dbReference type="UCSC" id="uc008nvy.1">
    <property type="organism name" value="mouse"/>
</dbReference>
<dbReference type="AGR" id="MGI:1915862"/>
<dbReference type="CTD" id="11065"/>
<dbReference type="MGI" id="MGI:1915862">
    <property type="gene designation" value="Ube2c"/>
</dbReference>
<dbReference type="VEuPathDB" id="HostDB:ENSMUSG00000001403"/>
<dbReference type="eggNOG" id="KOG0421">
    <property type="taxonomic scope" value="Eukaryota"/>
</dbReference>
<dbReference type="GeneTree" id="ENSGT00930000150941"/>
<dbReference type="InParanoid" id="Q9D1C1"/>
<dbReference type="OMA" id="PKDNHAV"/>
<dbReference type="OrthoDB" id="10253686at2759"/>
<dbReference type="PhylomeDB" id="Q9D1C1"/>
<dbReference type="TreeFam" id="TF101116"/>
<dbReference type="Reactome" id="R-MMU-141430">
    <property type="pathway name" value="Inactivation of APC/C via direct inhibition of the APC/C complex"/>
</dbReference>
<dbReference type="Reactome" id="R-MMU-174048">
    <property type="pathway name" value="APC/C:Cdc20 mediated degradation of Cyclin B"/>
</dbReference>
<dbReference type="Reactome" id="R-MMU-174084">
    <property type="pathway name" value="Autodegradation of Cdh1 by Cdh1:APC/C"/>
</dbReference>
<dbReference type="Reactome" id="R-MMU-174154">
    <property type="pathway name" value="APC/C:Cdc20 mediated degradation of Securin"/>
</dbReference>
<dbReference type="Reactome" id="R-MMU-174178">
    <property type="pathway name" value="APC/C:Cdh1 mediated degradation of Cdc20 and other APC/C:Cdh1 targeted proteins in late mitosis/early G1"/>
</dbReference>
<dbReference type="Reactome" id="R-MMU-174184">
    <property type="pathway name" value="Cdc20:Phospho-APC/C mediated degradation of Cyclin A"/>
</dbReference>
<dbReference type="Reactome" id="R-MMU-176407">
    <property type="pathway name" value="Conversion from APC/C:Cdc20 to APC/C:Cdh1 in late anaphase"/>
</dbReference>
<dbReference type="Reactome" id="R-MMU-176408">
    <property type="pathway name" value="Regulation of APC/C activators between G1/S and early anaphase"/>
</dbReference>
<dbReference type="Reactome" id="R-MMU-176409">
    <property type="pathway name" value="APC/C:Cdc20 mediated degradation of mitotic proteins"/>
</dbReference>
<dbReference type="Reactome" id="R-MMU-176412">
    <property type="pathway name" value="Phosphorylation of the APC/C"/>
</dbReference>
<dbReference type="Reactome" id="R-MMU-179409">
    <property type="pathway name" value="APC-Cdc20 mediated degradation of Nek2A"/>
</dbReference>
<dbReference type="Reactome" id="R-MMU-2467813">
    <property type="pathway name" value="Separation of Sister Chromatids"/>
</dbReference>
<dbReference type="Reactome" id="R-MMU-2559582">
    <property type="pathway name" value="Senescence-Associated Secretory Phenotype (SASP)"/>
</dbReference>
<dbReference type="Reactome" id="R-MMU-68867">
    <property type="pathway name" value="Assembly of the pre-replicative complex"/>
</dbReference>
<dbReference type="Reactome" id="R-MMU-69017">
    <property type="pathway name" value="CDK-mediated phosphorylation and removal of Cdc6"/>
</dbReference>
<dbReference type="Reactome" id="R-MMU-8866652">
    <property type="pathway name" value="Synthesis of active ubiquitin: roles of E1 and E2 enzymes"/>
</dbReference>
<dbReference type="Reactome" id="R-MMU-983168">
    <property type="pathway name" value="Antigen processing: Ubiquitination &amp; Proteasome degradation"/>
</dbReference>
<dbReference type="UniPathway" id="UPA00143"/>
<dbReference type="BioGRID-ORCS" id="68612">
    <property type="hits" value="12 hits in 80 CRISPR screens"/>
</dbReference>
<dbReference type="ChiTaRS" id="Ube2c">
    <property type="organism name" value="mouse"/>
</dbReference>
<dbReference type="PRO" id="PR:Q9D1C1"/>
<dbReference type="Proteomes" id="UP000000589">
    <property type="component" value="Chromosome 2"/>
</dbReference>
<dbReference type="RNAct" id="Q9D1C1">
    <property type="molecule type" value="protein"/>
</dbReference>
<dbReference type="Bgee" id="ENSMUSG00000001403">
    <property type="expression patterns" value="Expressed in fetal liver hematopoietic progenitor cell and 203 other cell types or tissues"/>
</dbReference>
<dbReference type="ExpressionAtlas" id="Q9D1C1">
    <property type="expression patterns" value="baseline and differential"/>
</dbReference>
<dbReference type="GO" id="GO:0005680">
    <property type="term" value="C:anaphase-promoting complex"/>
    <property type="evidence" value="ECO:0000250"/>
    <property type="project" value="UniProtKB"/>
</dbReference>
<dbReference type="GO" id="GO:0005524">
    <property type="term" value="F:ATP binding"/>
    <property type="evidence" value="ECO:0007669"/>
    <property type="project" value="UniProtKB-KW"/>
</dbReference>
<dbReference type="GO" id="GO:0061631">
    <property type="term" value="F:ubiquitin conjugating enzyme activity"/>
    <property type="evidence" value="ECO:0000266"/>
    <property type="project" value="MGI"/>
</dbReference>
<dbReference type="GO" id="GO:0031145">
    <property type="term" value="P:anaphase-promoting complex-dependent catabolic process"/>
    <property type="evidence" value="ECO:0000250"/>
    <property type="project" value="UniProtKB"/>
</dbReference>
<dbReference type="GO" id="GO:0051301">
    <property type="term" value="P:cell division"/>
    <property type="evidence" value="ECO:0007669"/>
    <property type="project" value="UniProtKB-KW"/>
</dbReference>
<dbReference type="GO" id="GO:0010458">
    <property type="term" value="P:exit from mitosis"/>
    <property type="evidence" value="ECO:0000250"/>
    <property type="project" value="UniProtKB"/>
</dbReference>
<dbReference type="GO" id="GO:0010994">
    <property type="term" value="P:free ubiquitin chain polymerization"/>
    <property type="evidence" value="ECO:0000250"/>
    <property type="project" value="UniProtKB"/>
</dbReference>
<dbReference type="GO" id="GO:0070979">
    <property type="term" value="P:protein K11-linked ubiquitination"/>
    <property type="evidence" value="ECO:0000250"/>
    <property type="project" value="UniProtKB"/>
</dbReference>
<dbReference type="GO" id="GO:0070936">
    <property type="term" value="P:protein K48-linked ubiquitination"/>
    <property type="evidence" value="ECO:0000250"/>
    <property type="project" value="UniProtKB"/>
</dbReference>
<dbReference type="GO" id="GO:0006511">
    <property type="term" value="P:ubiquitin-dependent protein catabolic process"/>
    <property type="evidence" value="ECO:0000250"/>
    <property type="project" value="UniProtKB"/>
</dbReference>
<dbReference type="CDD" id="cd23791">
    <property type="entry name" value="UBCc_UBE2C"/>
    <property type="match status" value="1"/>
</dbReference>
<dbReference type="FunFam" id="3.10.110.10:FF:000039">
    <property type="entry name" value="Ubiquitin-conjugating enzyme E2 C"/>
    <property type="match status" value="1"/>
</dbReference>
<dbReference type="Gene3D" id="3.10.110.10">
    <property type="entry name" value="Ubiquitin Conjugating Enzyme"/>
    <property type="match status" value="1"/>
</dbReference>
<dbReference type="InterPro" id="IPR050113">
    <property type="entry name" value="Ub_conjugating_enzyme"/>
</dbReference>
<dbReference type="InterPro" id="IPR000608">
    <property type="entry name" value="UBQ-conjugat_E2_core"/>
</dbReference>
<dbReference type="InterPro" id="IPR023313">
    <property type="entry name" value="UBQ-conjugating_AS"/>
</dbReference>
<dbReference type="InterPro" id="IPR016135">
    <property type="entry name" value="UBQ-conjugating_enzyme/RWD"/>
</dbReference>
<dbReference type="PANTHER" id="PTHR24067">
    <property type="entry name" value="UBIQUITIN-CONJUGATING ENZYME E2"/>
    <property type="match status" value="1"/>
</dbReference>
<dbReference type="Pfam" id="PF00179">
    <property type="entry name" value="UQ_con"/>
    <property type="match status" value="1"/>
</dbReference>
<dbReference type="SMART" id="SM00212">
    <property type="entry name" value="UBCc"/>
    <property type="match status" value="1"/>
</dbReference>
<dbReference type="SUPFAM" id="SSF54495">
    <property type="entry name" value="UBC-like"/>
    <property type="match status" value="1"/>
</dbReference>
<dbReference type="PROSITE" id="PS00183">
    <property type="entry name" value="UBC_1"/>
    <property type="match status" value="1"/>
</dbReference>
<dbReference type="PROSITE" id="PS50127">
    <property type="entry name" value="UBC_2"/>
    <property type="match status" value="1"/>
</dbReference>
<organism>
    <name type="scientific">Mus musculus</name>
    <name type="common">Mouse</name>
    <dbReference type="NCBI Taxonomy" id="10090"/>
    <lineage>
        <taxon>Eukaryota</taxon>
        <taxon>Metazoa</taxon>
        <taxon>Chordata</taxon>
        <taxon>Craniata</taxon>
        <taxon>Vertebrata</taxon>
        <taxon>Euteleostomi</taxon>
        <taxon>Mammalia</taxon>
        <taxon>Eutheria</taxon>
        <taxon>Euarchontoglires</taxon>
        <taxon>Glires</taxon>
        <taxon>Rodentia</taxon>
        <taxon>Myomorpha</taxon>
        <taxon>Muroidea</taxon>
        <taxon>Muridae</taxon>
        <taxon>Murinae</taxon>
        <taxon>Mus</taxon>
        <taxon>Mus</taxon>
    </lineage>
</organism>
<name>UBE2C_MOUSE</name>
<protein>
    <recommendedName>
        <fullName>Ubiquitin-conjugating enzyme E2 C</fullName>
        <ecNumber>2.3.2.23</ecNumber>
    </recommendedName>
    <alternativeName>
        <fullName>(E3-independent) E2 ubiquitin-conjugating enzyme C</fullName>
        <ecNumber>2.3.2.24</ecNumber>
    </alternativeName>
    <alternativeName>
        <fullName>E2 ubiquitin-conjugating enzyme C</fullName>
    </alternativeName>
    <alternativeName>
        <fullName>UbcH10</fullName>
    </alternativeName>
    <alternativeName>
        <fullName>Ubiquitin carrier protein C</fullName>
    </alternativeName>
    <alternativeName>
        <fullName>Ubiquitin-protein ligase C</fullName>
    </alternativeName>
</protein>
<feature type="initiator methionine" description="Removed" evidence="1">
    <location>
        <position position="1"/>
    </location>
</feature>
<feature type="chain" id="PRO_0000082561" description="Ubiquitin-conjugating enzyme E2 C">
    <location>
        <begin position="2"/>
        <end position="179"/>
    </location>
</feature>
<feature type="domain" description="UBC core" evidence="2">
    <location>
        <begin position="30"/>
        <end position="175"/>
    </location>
</feature>
<feature type="active site" description="Glycyl thioester intermediate" evidence="2 3">
    <location>
        <position position="114"/>
    </location>
</feature>
<feature type="modified residue" description="N-acetylalanine" evidence="1">
    <location>
        <position position="2"/>
    </location>
</feature>
<feature type="modified residue" description="Phosphoserine" evidence="1">
    <location>
        <position position="3"/>
    </location>
</feature>
<comment type="function">
    <text evidence="1">Accepts ubiquitin from the E1 complex and catalyzes its covalent attachment to other proteins. In vitro catalyzes 'Lys-11'- and 'Lys-48'-linked polyubiquitination. Acts as an essential factor of the anaphase promoting complex/cyclosome (APC/C), a cell cycle-regulated ubiquitin ligase that controls progression through mitosis. Acts by initiating 'Lys-11'-linked polyubiquitin chains on APC/C substrates, leading to the degradation of APC/C substrates by the proteasome and promoting mitotic exit.</text>
</comment>
<comment type="catalytic activity">
    <reaction evidence="1 2 3">
        <text>S-ubiquitinyl-[E1 ubiquitin-activating enzyme]-L-cysteine + [E2 ubiquitin-conjugating enzyme]-L-cysteine = [E1 ubiquitin-activating enzyme]-L-cysteine + S-ubiquitinyl-[E2 ubiquitin-conjugating enzyme]-L-cysteine.</text>
        <dbReference type="EC" id="2.3.2.23"/>
    </reaction>
</comment>
<comment type="catalytic activity">
    <reaction evidence="1">
        <text>S-ubiquitinyl-[E1 ubiquitin-activating enzyme]-L-cysteine + [acceptor protein]-L-lysine = [E1 ubiquitin-activating enzyme]-L-cysteine + N(6)-monoubiquitinyl-[acceptor protein]-L-lysine.</text>
        <dbReference type="EC" id="2.3.2.24"/>
    </reaction>
</comment>
<comment type="pathway">
    <text evidence="2">Protein modification; protein ubiquitination.</text>
</comment>
<comment type="subunit">
    <text evidence="1">Component of the APC/C complex, composed of at least 14 distinct subunits that assemble into a complex of at least 19 chains with a combined molecular mass of around 1.2 MDa. Within this complex, directly interacts with ANAPC2.</text>
</comment>
<comment type="PTM">
    <text evidence="1">Autoubiquitinated by the APC/C complex, leading to its degradation by the proteasome. Its degradation plays a central role in APC/C regulation, allowing cyclin-A accumulation before S phase entry. APC/C substrates inhibit the autoubiquitination of UBE2C/UBCH10 but not its E2 function, hence APC/C remaining active until its substrates have been destroyed.</text>
</comment>
<comment type="similarity">
    <text evidence="2">Belongs to the ubiquitin-conjugating enzyme family.</text>
</comment>